<gene>
    <name type="primary">otx1b</name>
    <name type="synonym">otx1</name>
</gene>
<dbReference type="EMBL" id="D26172">
    <property type="protein sequence ID" value="BAA05158.1"/>
    <property type="molecule type" value="mRNA"/>
</dbReference>
<dbReference type="EMBL" id="U14591">
    <property type="protein sequence ID" value="AAA78900.1"/>
    <property type="molecule type" value="mRNA"/>
</dbReference>
<dbReference type="EMBL" id="BC045290">
    <property type="protein sequence ID" value="AAH45290.1"/>
    <property type="molecule type" value="mRNA"/>
</dbReference>
<dbReference type="PIR" id="I51751">
    <property type="entry name" value="I51751"/>
</dbReference>
<dbReference type="RefSeq" id="NP_571325.2">
    <property type="nucleotide sequence ID" value="NM_131250.2"/>
</dbReference>
<dbReference type="SMR" id="Q91994"/>
<dbReference type="FunCoup" id="Q91994">
    <property type="interactions" value="251"/>
</dbReference>
<dbReference type="STRING" id="7955.ENSDARP00000064082"/>
<dbReference type="PaxDb" id="7955-ENSDARP00000064082"/>
<dbReference type="Ensembl" id="ENSDART00000064083">
    <property type="protein sequence ID" value="ENSDARP00000064082"/>
    <property type="gene ID" value="ENSDARG00000094992"/>
</dbReference>
<dbReference type="Ensembl" id="ENSDART00000179858">
    <property type="protein sequence ID" value="ENSDARP00000157164"/>
    <property type="gene ID" value="ENSDARG00000094992"/>
</dbReference>
<dbReference type="GeneID" id="30500"/>
<dbReference type="KEGG" id="dre:30500"/>
<dbReference type="AGR" id="ZFIN:ZDB-GENE-980526-400"/>
<dbReference type="CTD" id="5013"/>
<dbReference type="ZFIN" id="ZDB-GENE-980526-400">
    <property type="gene designation" value="otx1"/>
</dbReference>
<dbReference type="eggNOG" id="KOG2251">
    <property type="taxonomic scope" value="Eukaryota"/>
</dbReference>
<dbReference type="HOGENOM" id="CLU_064370_0_0_1"/>
<dbReference type="InParanoid" id="Q91994"/>
<dbReference type="OMA" id="ASYSMSY"/>
<dbReference type="OrthoDB" id="6159439at2759"/>
<dbReference type="PhylomeDB" id="Q91994"/>
<dbReference type="TreeFam" id="TF351179"/>
<dbReference type="PRO" id="PR:Q91994"/>
<dbReference type="Proteomes" id="UP000000437">
    <property type="component" value="Chromosome 17"/>
</dbReference>
<dbReference type="Bgee" id="ENSDARG00000094992">
    <property type="expression patterns" value="Expressed in cleaving embryo and 80 other cell types or tissues"/>
</dbReference>
<dbReference type="GO" id="GO:0005634">
    <property type="term" value="C:nucleus"/>
    <property type="evidence" value="ECO:0000318"/>
    <property type="project" value="GO_Central"/>
</dbReference>
<dbReference type="GO" id="GO:0000981">
    <property type="term" value="F:DNA-binding transcription factor activity, RNA polymerase II-specific"/>
    <property type="evidence" value="ECO:0000318"/>
    <property type="project" value="GO_Central"/>
</dbReference>
<dbReference type="GO" id="GO:0000978">
    <property type="term" value="F:RNA polymerase II cis-regulatory region sequence-specific DNA binding"/>
    <property type="evidence" value="ECO:0000318"/>
    <property type="project" value="GO_Central"/>
</dbReference>
<dbReference type="GO" id="GO:0042472">
    <property type="term" value="P:inner ear morphogenesis"/>
    <property type="evidence" value="ECO:0000315"/>
    <property type="project" value="ZFIN"/>
</dbReference>
<dbReference type="GO" id="GO:0060875">
    <property type="term" value="P:lateral semicircular canal development"/>
    <property type="evidence" value="ECO:0000315"/>
    <property type="project" value="ZFIN"/>
</dbReference>
<dbReference type="GO" id="GO:0006357">
    <property type="term" value="P:regulation of transcription by RNA polymerase II"/>
    <property type="evidence" value="ECO:0000318"/>
    <property type="project" value="GO_Central"/>
</dbReference>
<dbReference type="GO" id="GO:0003406">
    <property type="term" value="P:retinal pigment epithelium development"/>
    <property type="evidence" value="ECO:0000316"/>
    <property type="project" value="ZFIN"/>
</dbReference>
<dbReference type="CDD" id="cd00086">
    <property type="entry name" value="homeodomain"/>
    <property type="match status" value="1"/>
</dbReference>
<dbReference type="FunFam" id="1.10.10.60:FF:000142">
    <property type="entry name" value="homeobox protein OTX2 isoform X2"/>
    <property type="match status" value="1"/>
</dbReference>
<dbReference type="Gene3D" id="1.10.10.60">
    <property type="entry name" value="Homeodomain-like"/>
    <property type="match status" value="1"/>
</dbReference>
<dbReference type="InterPro" id="IPR001356">
    <property type="entry name" value="HD"/>
</dbReference>
<dbReference type="InterPro" id="IPR017970">
    <property type="entry name" value="Homeobox_CS"/>
</dbReference>
<dbReference type="InterPro" id="IPR009057">
    <property type="entry name" value="Homeodomain-like_sf"/>
</dbReference>
<dbReference type="InterPro" id="IPR003026">
    <property type="entry name" value="Otx1_TF"/>
</dbReference>
<dbReference type="InterPro" id="IPR003025">
    <property type="entry name" value="Otx_TF"/>
</dbReference>
<dbReference type="InterPro" id="IPR013851">
    <property type="entry name" value="Otx_TF_C"/>
</dbReference>
<dbReference type="PANTHER" id="PTHR45793">
    <property type="entry name" value="HOMEOBOX PROTEIN"/>
    <property type="match status" value="1"/>
</dbReference>
<dbReference type="PANTHER" id="PTHR45793:SF9">
    <property type="entry name" value="HOMEOBOX PROTEIN OTX1"/>
    <property type="match status" value="1"/>
</dbReference>
<dbReference type="Pfam" id="PF00046">
    <property type="entry name" value="Homeodomain"/>
    <property type="match status" value="1"/>
</dbReference>
<dbReference type="Pfam" id="PF03529">
    <property type="entry name" value="TF_Otx"/>
    <property type="match status" value="1"/>
</dbReference>
<dbReference type="PRINTS" id="PR01256">
    <property type="entry name" value="OTX1HOMEOBOX"/>
</dbReference>
<dbReference type="PRINTS" id="PR01255">
    <property type="entry name" value="OTXHOMEOBOX"/>
</dbReference>
<dbReference type="SMART" id="SM00389">
    <property type="entry name" value="HOX"/>
    <property type="match status" value="1"/>
</dbReference>
<dbReference type="SUPFAM" id="SSF46689">
    <property type="entry name" value="Homeodomain-like"/>
    <property type="match status" value="1"/>
</dbReference>
<dbReference type="PROSITE" id="PS00027">
    <property type="entry name" value="HOMEOBOX_1"/>
    <property type="match status" value="1"/>
</dbReference>
<dbReference type="PROSITE" id="PS50071">
    <property type="entry name" value="HOMEOBOX_2"/>
    <property type="match status" value="1"/>
</dbReference>
<feature type="chain" id="PRO_0000049213" description="Homeobox protein OTX1 B">
    <location>
        <begin position="1"/>
        <end position="323"/>
    </location>
</feature>
<feature type="DNA-binding region" description="Homeobox" evidence="1">
    <location>
        <begin position="38"/>
        <end position="97"/>
    </location>
</feature>
<feature type="region of interest" description="Disordered" evidence="2">
    <location>
        <begin position="91"/>
        <end position="155"/>
    </location>
</feature>
<feature type="region of interest" description="Disordered" evidence="2">
    <location>
        <begin position="168"/>
        <end position="204"/>
    </location>
</feature>
<feature type="region of interest" description="Disordered" evidence="2">
    <location>
        <begin position="239"/>
        <end position="277"/>
    </location>
</feature>
<feature type="compositionally biased region" description="Polar residues" evidence="2">
    <location>
        <begin position="94"/>
        <end position="105"/>
    </location>
</feature>
<feature type="compositionally biased region" description="Polar residues" evidence="2">
    <location>
        <begin position="115"/>
        <end position="127"/>
    </location>
</feature>
<feature type="compositionally biased region" description="Low complexity" evidence="2">
    <location>
        <begin position="128"/>
        <end position="155"/>
    </location>
</feature>
<feature type="compositionally biased region" description="Low complexity" evidence="2">
    <location>
        <begin position="168"/>
        <end position="178"/>
    </location>
</feature>
<feature type="compositionally biased region" description="Polar residues" evidence="2">
    <location>
        <begin position="185"/>
        <end position="204"/>
    </location>
</feature>
<feature type="compositionally biased region" description="Basic residues" evidence="2">
    <location>
        <begin position="257"/>
        <end position="275"/>
    </location>
</feature>
<feature type="sequence conflict" description="In Ref. 3; AAH45290." evidence="6" ref="3">
    <original>S</original>
    <variation>C</variation>
    <location>
        <position position="151"/>
    </location>
</feature>
<name>OTX1B_DANRE</name>
<sequence length="323" mass="35208">MMSYLKQPPYAMNGLGLSGAAMDLLHPSVGYPATPRKQRRERTTFTRSQLDILEALFAKTRYPDIFMREEVALKINLPESRVQVWFKNRRAKCRQQQQSGSSTKTRPAKKKSSPTRESTGSESSGQFTPPAVSSAGSSSSSSSSTNNTGISSTSTSISTVSSIWSPAISPGSAPPSVSLPEPVAPSNTSCMQRSVSGTASSTYPMPYNQTTGYSQGYPTPSGSYFSGVDCGSYLAPMHSHHHPHQLSPMTASSMPTHPHHHISQSSGHHHHHHHQAYSGTGLAFNSSDCLDYKEQTASSWKLNFNTTDCLDYKDQASWRFQVL</sequence>
<keyword id="KW-0217">Developmental protein</keyword>
<keyword id="KW-0238">DNA-binding</keyword>
<keyword id="KW-0371">Homeobox</keyword>
<keyword id="KW-0539">Nucleus</keyword>
<keyword id="KW-1185">Reference proteome</keyword>
<protein>
    <recommendedName>
        <fullName>Homeobox protein OTX1 B</fullName>
        <shortName>zOtx1</shortName>
    </recommendedName>
    <alternativeName>
        <fullName>Orthodenticle homolog 1 B</fullName>
    </alternativeName>
</protein>
<evidence type="ECO:0000255" key="1">
    <source>
        <dbReference type="PROSITE-ProRule" id="PRU00108"/>
    </source>
</evidence>
<evidence type="ECO:0000256" key="2">
    <source>
        <dbReference type="SAM" id="MobiDB-lite"/>
    </source>
</evidence>
<evidence type="ECO:0000269" key="3">
    <source>
    </source>
</evidence>
<evidence type="ECO:0000269" key="4">
    <source>
    </source>
</evidence>
<evidence type="ECO:0000269" key="5">
    <source>
    </source>
</evidence>
<evidence type="ECO:0000305" key="6"/>
<comment type="function">
    <text>May play a role in very early embryogenesis, gastrulation, and the development and subdivision of the diencephalon and the midbrain.</text>
</comment>
<comment type="subcellular location">
    <subcellularLocation>
        <location evidence="6">Nucleus</location>
    </subcellularLocation>
</comment>
<comment type="tissue specificity">
    <text evidence="3 4 5">Embryonic expression is highly dynamic. In early gastrula embryos, expressed in the involuting presumptive anterior mesoderm. Found in the head rudiment at 9 hours of development, and at 12 hours of development expression increases at the caudal side but decreases at the rostral side. With the extension of the body axis, expression extends to neuroectodermal regions fated to become fore- and mid-brain; detected in the presumptive border between the midbrain and the hindbrain at 18 hours of development, and found in the diencephalon and the midbrain at 24 hours of development.</text>
</comment>
<comment type="developmental stage">
    <text evidence="3">Found in embryos at 0-2 hours of development, levels decrease drastically at 6 hours of development but increase again at 12 hours of development.</text>
</comment>
<comment type="similarity">
    <text evidence="6">Belongs to the paired homeobox family. Bicoid subfamily.</text>
</comment>
<organism>
    <name type="scientific">Danio rerio</name>
    <name type="common">Zebrafish</name>
    <name type="synonym">Brachydanio rerio</name>
    <dbReference type="NCBI Taxonomy" id="7955"/>
    <lineage>
        <taxon>Eukaryota</taxon>
        <taxon>Metazoa</taxon>
        <taxon>Chordata</taxon>
        <taxon>Craniata</taxon>
        <taxon>Vertebrata</taxon>
        <taxon>Euteleostomi</taxon>
        <taxon>Actinopterygii</taxon>
        <taxon>Neopterygii</taxon>
        <taxon>Teleostei</taxon>
        <taxon>Ostariophysi</taxon>
        <taxon>Cypriniformes</taxon>
        <taxon>Danionidae</taxon>
        <taxon>Danioninae</taxon>
        <taxon>Danio</taxon>
    </lineage>
</organism>
<reference key="1">
    <citation type="journal article" date="1994" name="Brain Res. Mol. Brain Res.">
        <title>Different spatio-temporal expressions of three otx homeoprotein transcripts during zebrafish embryogenesis.</title>
        <authorList>
            <person name="Mori H."/>
            <person name="Miyazaki Y."/>
            <person name="Morita T."/>
            <person name="Nitta H."/>
            <person name="Mishina M."/>
        </authorList>
    </citation>
    <scope>NUCLEOTIDE SEQUENCE [MRNA]</scope>
    <scope>TISSUE SPECIFICITY</scope>
    <source>
        <strain>AB</strain>
    </source>
</reference>
<reference key="2">
    <citation type="journal article" date="1994" name="Mech. Dev.">
        <title>Expression of two zebrafish orthodenticle-related genes in the embryonic brain.</title>
        <authorList>
            <person name="Li Y."/>
            <person name="Allende M.L."/>
            <person name="Finkelstein R."/>
            <person name="Weinberg E.S."/>
        </authorList>
    </citation>
    <scope>NUCLEOTIDE SEQUENCE [MRNA]</scope>
    <scope>TISSUE SPECIFICITY</scope>
    <scope>DEVELOPMENTAL STAGE</scope>
</reference>
<reference key="3">
    <citation type="submission" date="2003-01" db="EMBL/GenBank/DDBJ databases">
        <authorList>
            <consortium name="NIH - Zebrafish Gene Collection (ZGC) project"/>
        </authorList>
    </citation>
    <scope>NUCLEOTIDE SEQUENCE [LARGE SCALE MRNA]</scope>
    <source>
        <strain>AB</strain>
    </source>
</reference>
<reference key="4">
    <citation type="journal article" date="1995" name="Int. J. Dev. Biol.">
        <title>Expression pattern of two otx genes suggests a role in specifying anterior body structures in zebrafish.</title>
        <authorList>
            <person name="Mercier P."/>
            <person name="Simeone A."/>
            <person name="Cotelli F."/>
            <person name="Boncinelli E."/>
        </authorList>
    </citation>
    <scope>NUCLEOTIDE SEQUENCE [GENOMIC DNA] OF 84-323</scope>
    <scope>TISSUE SPECIFICITY</scope>
</reference>
<accession>Q91994</accession>
<accession>Q7ZU54</accession>
<proteinExistence type="evidence at transcript level"/>